<reference key="1">
    <citation type="journal article" date="2005" name="J. Bacteriol.">
        <title>Whole-genome sequencing of Staphylococcus haemolyticus uncovers the extreme plasticity of its genome and the evolution of human-colonizing staphylococcal species.</title>
        <authorList>
            <person name="Takeuchi F."/>
            <person name="Watanabe S."/>
            <person name="Baba T."/>
            <person name="Yuzawa H."/>
            <person name="Ito T."/>
            <person name="Morimoto Y."/>
            <person name="Kuroda M."/>
            <person name="Cui L."/>
            <person name="Takahashi M."/>
            <person name="Ankai A."/>
            <person name="Baba S."/>
            <person name="Fukui S."/>
            <person name="Lee J.C."/>
            <person name="Hiramatsu K."/>
        </authorList>
    </citation>
    <scope>NUCLEOTIDE SEQUENCE [LARGE SCALE GENOMIC DNA]</scope>
    <source>
        <strain>JCSC1435</strain>
    </source>
</reference>
<protein>
    <recommendedName>
        <fullName evidence="1">Adenylyl-sulfate kinase</fullName>
        <ecNumber evidence="1">2.7.1.25</ecNumber>
    </recommendedName>
    <alternativeName>
        <fullName evidence="1">APS kinase</fullName>
    </alternativeName>
    <alternativeName>
        <fullName evidence="1">ATP adenosine-5'-phosphosulfate 3'-phosphotransferase</fullName>
    </alternativeName>
    <alternativeName>
        <fullName evidence="1">Adenosine-5'-phosphosulfate kinase</fullName>
    </alternativeName>
</protein>
<sequence length="199" mass="22491">MSQSSNITWHDSEVTKSDRQQQNGHKSVVIWFTGLSGSGKSTVSVELEKALFQLEKHSYRLDGDNVRHGLNKNLGFSPEDRKENIRRIGEVSKLLVDAGTIAITAFISPYRADRDEVREILEDGEFIEVYTECSVEACEQRDPKGLYKKARSGEIKEFTGISASYEAPHQPEITINTEHQSVEESVSTIIEYLKNKEII</sequence>
<gene>
    <name evidence="1" type="primary">cysC</name>
    <name type="ordered locus">SH0420</name>
</gene>
<evidence type="ECO:0000255" key="1">
    <source>
        <dbReference type="HAMAP-Rule" id="MF_00065"/>
    </source>
</evidence>
<evidence type="ECO:0000256" key="2">
    <source>
        <dbReference type="SAM" id="MobiDB-lite"/>
    </source>
</evidence>
<feature type="chain" id="PRO_1000009036" description="Adenylyl-sulfate kinase">
    <location>
        <begin position="1"/>
        <end position="199"/>
    </location>
</feature>
<feature type="region of interest" description="Disordered" evidence="2">
    <location>
        <begin position="1"/>
        <end position="21"/>
    </location>
</feature>
<feature type="compositionally biased region" description="Basic and acidic residues" evidence="2">
    <location>
        <begin position="10"/>
        <end position="19"/>
    </location>
</feature>
<feature type="active site" description="Phosphoserine intermediate" evidence="1">
    <location>
        <position position="108"/>
    </location>
</feature>
<feature type="binding site" evidence="1">
    <location>
        <begin position="34"/>
        <end position="41"/>
    </location>
    <ligand>
        <name>ATP</name>
        <dbReference type="ChEBI" id="CHEBI:30616"/>
    </ligand>
</feature>
<accession>Q4L9E6</accession>
<keyword id="KW-0067">ATP-binding</keyword>
<keyword id="KW-0418">Kinase</keyword>
<keyword id="KW-0547">Nucleotide-binding</keyword>
<keyword id="KW-0597">Phosphoprotein</keyword>
<keyword id="KW-0808">Transferase</keyword>
<dbReference type="EC" id="2.7.1.25" evidence="1"/>
<dbReference type="EMBL" id="AP006716">
    <property type="protein sequence ID" value="BAE03729.1"/>
    <property type="molecule type" value="Genomic_DNA"/>
</dbReference>
<dbReference type="RefSeq" id="WP_011274746.1">
    <property type="nucleotide sequence ID" value="NC_007168.1"/>
</dbReference>
<dbReference type="SMR" id="Q4L9E6"/>
<dbReference type="KEGG" id="sha:SH0420"/>
<dbReference type="eggNOG" id="COG0529">
    <property type="taxonomic scope" value="Bacteria"/>
</dbReference>
<dbReference type="HOGENOM" id="CLU_046932_1_0_9"/>
<dbReference type="OrthoDB" id="9804504at2"/>
<dbReference type="UniPathway" id="UPA00140">
    <property type="reaction ID" value="UER00205"/>
</dbReference>
<dbReference type="Proteomes" id="UP000000543">
    <property type="component" value="Chromosome"/>
</dbReference>
<dbReference type="GO" id="GO:0004020">
    <property type="term" value="F:adenylylsulfate kinase activity"/>
    <property type="evidence" value="ECO:0007669"/>
    <property type="project" value="UniProtKB-UniRule"/>
</dbReference>
<dbReference type="GO" id="GO:0005524">
    <property type="term" value="F:ATP binding"/>
    <property type="evidence" value="ECO:0007669"/>
    <property type="project" value="UniProtKB-UniRule"/>
</dbReference>
<dbReference type="GO" id="GO:0070814">
    <property type="term" value="P:hydrogen sulfide biosynthetic process"/>
    <property type="evidence" value="ECO:0007669"/>
    <property type="project" value="UniProtKB-UniRule"/>
</dbReference>
<dbReference type="GO" id="GO:0000103">
    <property type="term" value="P:sulfate assimilation"/>
    <property type="evidence" value="ECO:0007669"/>
    <property type="project" value="UniProtKB-UniRule"/>
</dbReference>
<dbReference type="CDD" id="cd02027">
    <property type="entry name" value="APSK"/>
    <property type="match status" value="1"/>
</dbReference>
<dbReference type="FunFam" id="3.40.50.300:FF:000212">
    <property type="entry name" value="Adenylyl-sulfate kinase"/>
    <property type="match status" value="1"/>
</dbReference>
<dbReference type="Gene3D" id="3.40.50.300">
    <property type="entry name" value="P-loop containing nucleotide triphosphate hydrolases"/>
    <property type="match status" value="1"/>
</dbReference>
<dbReference type="HAMAP" id="MF_00065">
    <property type="entry name" value="Adenylyl_sulf_kinase"/>
    <property type="match status" value="1"/>
</dbReference>
<dbReference type="InterPro" id="IPR002891">
    <property type="entry name" value="APS_kinase"/>
</dbReference>
<dbReference type="InterPro" id="IPR027417">
    <property type="entry name" value="P-loop_NTPase"/>
</dbReference>
<dbReference type="NCBIfam" id="TIGR00455">
    <property type="entry name" value="apsK"/>
    <property type="match status" value="1"/>
</dbReference>
<dbReference type="NCBIfam" id="NF003013">
    <property type="entry name" value="PRK03846.1"/>
    <property type="match status" value="1"/>
</dbReference>
<dbReference type="PANTHER" id="PTHR11055">
    <property type="entry name" value="BIFUNCTIONAL 3'-PHOSPHOADENOSINE 5'-PHOSPHOSULFATE SYNTHASE"/>
    <property type="match status" value="1"/>
</dbReference>
<dbReference type="PANTHER" id="PTHR11055:SF1">
    <property type="entry name" value="PAPS SYNTHETASE, ISOFORM D"/>
    <property type="match status" value="1"/>
</dbReference>
<dbReference type="Pfam" id="PF01583">
    <property type="entry name" value="APS_kinase"/>
    <property type="match status" value="1"/>
</dbReference>
<dbReference type="SUPFAM" id="SSF52540">
    <property type="entry name" value="P-loop containing nucleoside triphosphate hydrolases"/>
    <property type="match status" value="1"/>
</dbReference>
<organism>
    <name type="scientific">Staphylococcus haemolyticus (strain JCSC1435)</name>
    <dbReference type="NCBI Taxonomy" id="279808"/>
    <lineage>
        <taxon>Bacteria</taxon>
        <taxon>Bacillati</taxon>
        <taxon>Bacillota</taxon>
        <taxon>Bacilli</taxon>
        <taxon>Bacillales</taxon>
        <taxon>Staphylococcaceae</taxon>
        <taxon>Staphylococcus</taxon>
    </lineage>
</organism>
<comment type="function">
    <text evidence="1">Catalyzes the synthesis of activated sulfate.</text>
</comment>
<comment type="catalytic activity">
    <reaction evidence="1">
        <text>adenosine 5'-phosphosulfate + ATP = 3'-phosphoadenylyl sulfate + ADP + H(+)</text>
        <dbReference type="Rhea" id="RHEA:24152"/>
        <dbReference type="ChEBI" id="CHEBI:15378"/>
        <dbReference type="ChEBI" id="CHEBI:30616"/>
        <dbReference type="ChEBI" id="CHEBI:58243"/>
        <dbReference type="ChEBI" id="CHEBI:58339"/>
        <dbReference type="ChEBI" id="CHEBI:456216"/>
        <dbReference type="EC" id="2.7.1.25"/>
    </reaction>
</comment>
<comment type="pathway">
    <text evidence="1">Sulfur metabolism; hydrogen sulfide biosynthesis; sulfite from sulfate: step 2/3.</text>
</comment>
<comment type="similarity">
    <text evidence="1">Belongs to the APS kinase family.</text>
</comment>
<proteinExistence type="inferred from homology"/>
<name>CYSC_STAHJ</name>